<gene>
    <name evidence="1" type="primary">rps27e</name>
    <name type="ordered locus">rrnAC3513</name>
</gene>
<proteinExistence type="inferred from homology"/>
<name>RS27_HALMA</name>
<feature type="chain" id="PRO_1000007132" description="Small ribosomal subunit protein eS27">
    <location>
        <begin position="1"/>
        <end position="57"/>
    </location>
</feature>
<feature type="zinc finger region" description="C4-type" evidence="1">
    <location>
        <begin position="10"/>
        <end position="32"/>
    </location>
</feature>
<feature type="binding site" evidence="1">
    <location>
        <position position="10"/>
    </location>
    <ligand>
        <name>Zn(2+)</name>
        <dbReference type="ChEBI" id="CHEBI:29105"/>
    </ligand>
</feature>
<feature type="binding site" evidence="1">
    <location>
        <position position="13"/>
    </location>
    <ligand>
        <name>Zn(2+)</name>
        <dbReference type="ChEBI" id="CHEBI:29105"/>
    </ligand>
</feature>
<feature type="binding site" evidence="1">
    <location>
        <position position="29"/>
    </location>
    <ligand>
        <name>Zn(2+)</name>
        <dbReference type="ChEBI" id="CHEBI:29105"/>
    </ligand>
</feature>
<feature type="binding site" evidence="1">
    <location>
        <position position="32"/>
    </location>
    <ligand>
        <name>Zn(2+)</name>
        <dbReference type="ChEBI" id="CHEBI:29105"/>
    </ligand>
</feature>
<dbReference type="EMBL" id="AY596297">
    <property type="protein sequence ID" value="AAV48182.1"/>
    <property type="molecule type" value="Genomic_DNA"/>
</dbReference>
<dbReference type="RefSeq" id="WP_004963588.1">
    <property type="nucleotide sequence ID" value="NZ_CP039138.1"/>
</dbReference>
<dbReference type="SMR" id="Q5UX21"/>
<dbReference type="STRING" id="272569.rrnAC3513"/>
<dbReference type="PaxDb" id="272569-rrnAC3513"/>
<dbReference type="EnsemblBacteria" id="AAV48182">
    <property type="protein sequence ID" value="AAV48182"/>
    <property type="gene ID" value="rrnAC3513"/>
</dbReference>
<dbReference type="KEGG" id="hma:rrnAC3513"/>
<dbReference type="PATRIC" id="fig|272569.17.peg.4019"/>
<dbReference type="eggNOG" id="arCOG04108">
    <property type="taxonomic scope" value="Archaea"/>
</dbReference>
<dbReference type="HOGENOM" id="CLU_199465_0_0_2"/>
<dbReference type="Proteomes" id="UP000001169">
    <property type="component" value="Chromosome I"/>
</dbReference>
<dbReference type="GO" id="GO:1990904">
    <property type="term" value="C:ribonucleoprotein complex"/>
    <property type="evidence" value="ECO:0007669"/>
    <property type="project" value="UniProtKB-KW"/>
</dbReference>
<dbReference type="GO" id="GO:0005840">
    <property type="term" value="C:ribosome"/>
    <property type="evidence" value="ECO:0007669"/>
    <property type="project" value="UniProtKB-KW"/>
</dbReference>
<dbReference type="GO" id="GO:0003735">
    <property type="term" value="F:structural constituent of ribosome"/>
    <property type="evidence" value="ECO:0007669"/>
    <property type="project" value="InterPro"/>
</dbReference>
<dbReference type="GO" id="GO:0008270">
    <property type="term" value="F:zinc ion binding"/>
    <property type="evidence" value="ECO:0007669"/>
    <property type="project" value="UniProtKB-UniRule"/>
</dbReference>
<dbReference type="GO" id="GO:0006412">
    <property type="term" value="P:translation"/>
    <property type="evidence" value="ECO:0007669"/>
    <property type="project" value="UniProtKB-UniRule"/>
</dbReference>
<dbReference type="Gene3D" id="2.20.25.100">
    <property type="entry name" value="Zn-binding ribosomal proteins"/>
    <property type="match status" value="1"/>
</dbReference>
<dbReference type="HAMAP" id="MF_00371">
    <property type="entry name" value="Ribosomal_eS27"/>
    <property type="match status" value="1"/>
</dbReference>
<dbReference type="InterPro" id="IPR000592">
    <property type="entry name" value="Ribosomal_eS27"/>
</dbReference>
<dbReference type="InterPro" id="IPR023407">
    <property type="entry name" value="Ribosomal_eS27_Zn-bd_dom_sf"/>
</dbReference>
<dbReference type="InterPro" id="IPR011332">
    <property type="entry name" value="Ribosomal_zn-bd"/>
</dbReference>
<dbReference type="NCBIfam" id="NF001629">
    <property type="entry name" value="PRK00415.1"/>
    <property type="match status" value="1"/>
</dbReference>
<dbReference type="Pfam" id="PF01667">
    <property type="entry name" value="Ribosomal_S27e"/>
    <property type="match status" value="1"/>
</dbReference>
<dbReference type="SUPFAM" id="SSF57829">
    <property type="entry name" value="Zn-binding ribosomal proteins"/>
    <property type="match status" value="1"/>
</dbReference>
<keyword id="KW-0479">Metal-binding</keyword>
<keyword id="KW-1185">Reference proteome</keyword>
<keyword id="KW-0687">Ribonucleoprotein</keyword>
<keyword id="KW-0689">Ribosomal protein</keyword>
<keyword id="KW-0862">Zinc</keyword>
<keyword id="KW-0863">Zinc-finger</keyword>
<comment type="cofactor">
    <cofactor evidence="1">
        <name>Zn(2+)</name>
        <dbReference type="ChEBI" id="CHEBI:29105"/>
    </cofactor>
    <text evidence="1">Binds 1 zinc ion per subunit.</text>
</comment>
<comment type="subunit">
    <text evidence="1">Part of the 30S ribosomal subunit.</text>
</comment>
<comment type="similarity">
    <text evidence="1">Belongs to the eukaryotic ribosomal protein eS27 family.</text>
</comment>
<reference key="1">
    <citation type="journal article" date="2004" name="Genome Res.">
        <title>Genome sequence of Haloarcula marismortui: a halophilic archaeon from the Dead Sea.</title>
        <authorList>
            <person name="Baliga N.S."/>
            <person name="Bonneau R."/>
            <person name="Facciotti M.T."/>
            <person name="Pan M."/>
            <person name="Glusman G."/>
            <person name="Deutsch E.W."/>
            <person name="Shannon P."/>
            <person name="Chiu Y."/>
            <person name="Weng R.S."/>
            <person name="Gan R.R."/>
            <person name="Hung P."/>
            <person name="Date S.V."/>
            <person name="Marcotte E."/>
            <person name="Hood L."/>
            <person name="Ng W.V."/>
        </authorList>
    </citation>
    <scope>NUCLEOTIDE SEQUENCE [LARGE SCALE GENOMIC DNA]</scope>
    <source>
        <strain>ATCC 43049 / DSM 3752 / JCM 8966 / VKM B-1809</strain>
    </source>
</reference>
<accession>Q5UX21</accession>
<protein>
    <recommendedName>
        <fullName evidence="1">Small ribosomal subunit protein eS27</fullName>
    </recommendedName>
    <alternativeName>
        <fullName evidence="2">30S ribosomal protein S27e</fullName>
    </alternativeName>
</protein>
<organism>
    <name type="scientific">Haloarcula marismortui (strain ATCC 43049 / DSM 3752 / JCM 8966 / VKM B-1809)</name>
    <name type="common">Halobacterium marismortui</name>
    <dbReference type="NCBI Taxonomy" id="272569"/>
    <lineage>
        <taxon>Archaea</taxon>
        <taxon>Methanobacteriati</taxon>
        <taxon>Methanobacteriota</taxon>
        <taxon>Stenosarchaea group</taxon>
        <taxon>Halobacteria</taxon>
        <taxon>Halobacteriales</taxon>
        <taxon>Haloarculaceae</taxon>
        <taxon>Haloarcula</taxon>
    </lineage>
</organism>
<sequence>MAGSFITVECPDCENEQSLFEKAASEVSCAVCGHTIARPTGGKADIEGEVTAVVEAR</sequence>
<evidence type="ECO:0000255" key="1">
    <source>
        <dbReference type="HAMAP-Rule" id="MF_00371"/>
    </source>
</evidence>
<evidence type="ECO:0000305" key="2"/>